<protein>
    <recommendedName>
        <fullName>Glycerol-3-phosphate acyltransferase 1</fullName>
        <shortName>AtGPAT1</shortName>
        <ecNumber>2.3.1.15</ecNumber>
    </recommendedName>
</protein>
<keyword id="KW-0012">Acyltransferase</keyword>
<keyword id="KW-0444">Lipid biosynthesis</keyword>
<keyword id="KW-0443">Lipid metabolism</keyword>
<keyword id="KW-0472">Membrane</keyword>
<keyword id="KW-0496">Mitochondrion</keyword>
<keyword id="KW-0594">Phospholipid biosynthesis</keyword>
<keyword id="KW-1208">Phospholipid metabolism</keyword>
<keyword id="KW-1185">Reference proteome</keyword>
<keyword id="KW-0808">Transferase</keyword>
<keyword id="KW-0812">Transmembrane</keyword>
<keyword id="KW-1133">Transmembrane helix</keyword>
<feature type="chain" id="PRO_0000195249" description="Glycerol-3-phosphate acyltransferase 1">
    <location>
        <begin position="1"/>
        <end position="585"/>
    </location>
</feature>
<feature type="transmembrane region" description="Helical" evidence="2">
    <location>
        <begin position="126"/>
        <end position="146"/>
    </location>
</feature>
<feature type="transmembrane region" description="Helical" evidence="2">
    <location>
        <begin position="334"/>
        <end position="354"/>
    </location>
</feature>
<feature type="transmembrane region" description="Helical" evidence="2">
    <location>
        <begin position="356"/>
        <end position="376"/>
    </location>
</feature>
<feature type="short sequence motif" description="HXXXXD motif">
    <location>
        <begin position="403"/>
        <end position="408"/>
    </location>
</feature>
<feature type="sequence conflict" description="In Ref. 3; AAM67097." evidence="4" ref="3">
    <original>K</original>
    <variation>N</variation>
    <location>
        <position position="21"/>
    </location>
</feature>
<feature type="sequence conflict" description="In Ref. 3; AAM67097." evidence="4" ref="3">
    <original>F</original>
    <variation>L</variation>
    <location>
        <position position="270"/>
    </location>
</feature>
<sequence length="585" mass="66514">MVLPELLVILAEWVLYRLLAKSCYRAARKLRGYGFQLKNLLSLSKTQSLHNNSQHHLHNHHQQNHPNQTLQDSLDPLFPSLTKYQELLLDKNRACSVSSDHYRDTFFCDIDGVLLRQHSSKHFHTFFPYFMLVAFEGGSIIRAILLLLSCSFLWTLQQETKLRVLSFITFSGLRVKDMDNVSRSVLPKFFLENLNIQVYDIWARTEYSKVVFTSLPQVLVERFLREHLNADDVIGTKLQEIKVMGRKFYTGLASGSGFVLKHKSAEDYFFDSKKKPALGIGSSSSPQDHIFISICKEAYFWNEEESMSKNNALPRERYPKPLIFHDGRLAFLPTPLATLAMFIWLPIGFLLAVFRISVGVFLPYHVANFLASMSGVRITFKTHNLNNGRPEKGNSGVLYVCNHRTLLDPVFLTTSLGKPLTAVTYSLSKFSEFIAPLKTVSLKRDRKKDGEAMQRLLSKGDLVVCPEGTTCREPYLLRFSPLFAELTEDIVPVAVDARVSMFYGTTASGLKCLDPIFFLMNPRPVYCLEILKKLPKEMTCAGGKSSFEVANFIQGELARVLGFECTNLTRRDKYLVLAGNEGIVR</sequence>
<reference key="1">
    <citation type="journal article" date="2000" name="Nature">
        <title>Sequence and analysis of chromosome 1 of the plant Arabidopsis thaliana.</title>
        <authorList>
            <person name="Theologis A."/>
            <person name="Ecker J.R."/>
            <person name="Palm C.J."/>
            <person name="Federspiel N.A."/>
            <person name="Kaul S."/>
            <person name="White O."/>
            <person name="Alonso J."/>
            <person name="Altafi H."/>
            <person name="Araujo R."/>
            <person name="Bowman C.L."/>
            <person name="Brooks S.Y."/>
            <person name="Buehler E."/>
            <person name="Chan A."/>
            <person name="Chao Q."/>
            <person name="Chen H."/>
            <person name="Cheuk R.F."/>
            <person name="Chin C.W."/>
            <person name="Chung M.K."/>
            <person name="Conn L."/>
            <person name="Conway A.B."/>
            <person name="Conway A.R."/>
            <person name="Creasy T.H."/>
            <person name="Dewar K."/>
            <person name="Dunn P."/>
            <person name="Etgu P."/>
            <person name="Feldblyum T.V."/>
            <person name="Feng J.-D."/>
            <person name="Fong B."/>
            <person name="Fujii C.Y."/>
            <person name="Gill J.E."/>
            <person name="Goldsmith A.D."/>
            <person name="Haas B."/>
            <person name="Hansen N.F."/>
            <person name="Hughes B."/>
            <person name="Huizar L."/>
            <person name="Hunter J.L."/>
            <person name="Jenkins J."/>
            <person name="Johnson-Hopson C."/>
            <person name="Khan S."/>
            <person name="Khaykin E."/>
            <person name="Kim C.J."/>
            <person name="Koo H.L."/>
            <person name="Kremenetskaia I."/>
            <person name="Kurtz D.B."/>
            <person name="Kwan A."/>
            <person name="Lam B."/>
            <person name="Langin-Hooper S."/>
            <person name="Lee A."/>
            <person name="Lee J.M."/>
            <person name="Lenz C.A."/>
            <person name="Li J.H."/>
            <person name="Li Y.-P."/>
            <person name="Lin X."/>
            <person name="Liu S.X."/>
            <person name="Liu Z.A."/>
            <person name="Luros J.S."/>
            <person name="Maiti R."/>
            <person name="Marziali A."/>
            <person name="Militscher J."/>
            <person name="Miranda M."/>
            <person name="Nguyen M."/>
            <person name="Nierman W.C."/>
            <person name="Osborne B.I."/>
            <person name="Pai G."/>
            <person name="Peterson J."/>
            <person name="Pham P.K."/>
            <person name="Rizzo M."/>
            <person name="Rooney T."/>
            <person name="Rowley D."/>
            <person name="Sakano H."/>
            <person name="Salzberg S.L."/>
            <person name="Schwartz J.R."/>
            <person name="Shinn P."/>
            <person name="Southwick A.M."/>
            <person name="Sun H."/>
            <person name="Tallon L.J."/>
            <person name="Tambunga G."/>
            <person name="Toriumi M.J."/>
            <person name="Town C.D."/>
            <person name="Utterback T."/>
            <person name="Van Aken S."/>
            <person name="Vaysberg M."/>
            <person name="Vysotskaia V.S."/>
            <person name="Walker M."/>
            <person name="Wu D."/>
            <person name="Yu G."/>
            <person name="Fraser C.M."/>
            <person name="Venter J.C."/>
            <person name="Davis R.W."/>
        </authorList>
    </citation>
    <scope>NUCLEOTIDE SEQUENCE [LARGE SCALE GENOMIC DNA]</scope>
    <source>
        <strain>cv. Columbia</strain>
    </source>
</reference>
<reference key="2">
    <citation type="journal article" date="2017" name="Plant J.">
        <title>Araport11: a complete reannotation of the Arabidopsis thaliana reference genome.</title>
        <authorList>
            <person name="Cheng C.Y."/>
            <person name="Krishnakumar V."/>
            <person name="Chan A.P."/>
            <person name="Thibaud-Nissen F."/>
            <person name="Schobel S."/>
            <person name="Town C.D."/>
        </authorList>
    </citation>
    <scope>GENOME REANNOTATION</scope>
    <source>
        <strain>cv. Columbia</strain>
    </source>
</reference>
<reference key="3">
    <citation type="submission" date="2002-03" db="EMBL/GenBank/DDBJ databases">
        <title>Full-length cDNA from Arabidopsis thaliana.</title>
        <authorList>
            <person name="Brover V.V."/>
            <person name="Troukhan M.E."/>
            <person name="Alexandrov N.A."/>
            <person name="Lu Y.-P."/>
            <person name="Flavell R.B."/>
            <person name="Feldmann K.A."/>
        </authorList>
    </citation>
    <scope>NUCLEOTIDE SEQUENCE [LARGE SCALE MRNA]</scope>
</reference>
<reference key="4">
    <citation type="journal article" date="2003" name="Plant Cell">
        <title>Arabidopsis AtGPAT1, a member of the membrane-bound glycerol-3-phosphate acyltransferase gene family, is essential for tapetum differentiation and male fertility.</title>
        <authorList>
            <person name="Zheng Z."/>
            <person name="Xia Q."/>
            <person name="Dauk M."/>
            <person name="Shen W."/>
            <person name="Selvaraj G."/>
            <person name="Zou J."/>
        </authorList>
    </citation>
    <scope>FUNCTION</scope>
    <scope>ENZYME ACTIVITY</scope>
    <scope>BIOPHYSICOCHEMICAL PROPERTIES</scope>
    <scope>SUBCELLULAR LOCATION</scope>
    <scope>TISSUE SPECIFICITY</scope>
    <scope>DISRUPTION PHENOTYPE</scope>
</reference>
<accession>Q9SHJ5</accession>
<accession>Q8L8V5</accession>
<comment type="function">
    <text evidence="3">Esterifies acyl-group from acyl-ACP to the sn-1 position of glycerol-3-phosphate, an essential step in glycerolipid biosynthesis. Involved in pollen development, by being required for tapetum differentiation and male fertility. In addition to the sporophytic effect, it also exerts a gametophytic effect on pollen performance.</text>
</comment>
<comment type="catalytic activity">
    <reaction evidence="3">
        <text>sn-glycerol 3-phosphate + an acyl-CoA = a 1-acyl-sn-glycero-3-phosphate + CoA</text>
        <dbReference type="Rhea" id="RHEA:15325"/>
        <dbReference type="ChEBI" id="CHEBI:57287"/>
        <dbReference type="ChEBI" id="CHEBI:57597"/>
        <dbReference type="ChEBI" id="CHEBI:57970"/>
        <dbReference type="ChEBI" id="CHEBI:58342"/>
        <dbReference type="EC" id="2.3.1.15"/>
    </reaction>
</comment>
<comment type="biophysicochemical properties">
    <kinetics>
        <Vmax evidence="3">217.42 pmol/min/mg enzyme</Vmax>
    </kinetics>
</comment>
<comment type="pathway">
    <text>Phospholipid metabolism; CDP-diacylglycerol biosynthesis; CDP-diacylglycerol from sn-glycerol 3-phosphate: step 1/3.</text>
</comment>
<comment type="subcellular location">
    <subcellularLocation>
        <location evidence="3">Membrane</location>
        <topology evidence="3">Multi-pass membrane protein</topology>
    </subcellularLocation>
    <subcellularLocation>
        <location evidence="3">Mitochondrion</location>
    </subcellularLocation>
    <text>According to PubMed:12897259 it is mitochondrial. However, no clear transit peptide is predicted by sequence analysis tools.</text>
</comment>
<comment type="tissue specificity">
    <text evidence="3">Highly expressed in developing siliques and flower buds. Weakly or not expressed in roots, seedlings and leaves.</text>
</comment>
<comment type="domain">
    <text evidence="1">The HXXXXD motif is essential for acyltransferase activity and may constitute the binding site for the phosphate moiety of the glycerol-3-phosphate.</text>
</comment>
<comment type="disruption phenotype">
    <text evidence="3">Plants display a massive pollen development arrest due to a perturbed degeneration of the tapetum, which is associated with altered endoplasmic reticulum profiles and reduced secretion. Defects correlate with several fatty acid composition changes in flower tissues and seeds. However, no significant change in seed oil content is observed.</text>
</comment>
<comment type="similarity">
    <text evidence="4">Belongs to the GPAT/DAPAT family.</text>
</comment>
<evidence type="ECO:0000250" key="1"/>
<evidence type="ECO:0000255" key="2"/>
<evidence type="ECO:0000269" key="3">
    <source>
    </source>
</evidence>
<evidence type="ECO:0000305" key="4"/>
<proteinExistence type="evidence at protein level"/>
<organism>
    <name type="scientific">Arabidopsis thaliana</name>
    <name type="common">Mouse-ear cress</name>
    <dbReference type="NCBI Taxonomy" id="3702"/>
    <lineage>
        <taxon>Eukaryota</taxon>
        <taxon>Viridiplantae</taxon>
        <taxon>Streptophyta</taxon>
        <taxon>Embryophyta</taxon>
        <taxon>Tracheophyta</taxon>
        <taxon>Spermatophyta</taxon>
        <taxon>Magnoliopsida</taxon>
        <taxon>eudicotyledons</taxon>
        <taxon>Gunneridae</taxon>
        <taxon>Pentapetalae</taxon>
        <taxon>rosids</taxon>
        <taxon>malvids</taxon>
        <taxon>Brassicales</taxon>
        <taxon>Brassicaceae</taxon>
        <taxon>Camelineae</taxon>
        <taxon>Arabidopsis</taxon>
    </lineage>
</organism>
<gene>
    <name type="primary">GPAT1</name>
    <name type="ordered locus">At1g06520</name>
    <name type="ORF">F12K11.15</name>
</gene>
<name>GPAT1_ARATH</name>
<dbReference type="EC" id="2.3.1.15"/>
<dbReference type="EMBL" id="AC007592">
    <property type="protein sequence ID" value="AAF24816.1"/>
    <property type="molecule type" value="Genomic_DNA"/>
</dbReference>
<dbReference type="EMBL" id="CP002684">
    <property type="protein sequence ID" value="AEE28001.1"/>
    <property type="molecule type" value="Genomic_DNA"/>
</dbReference>
<dbReference type="EMBL" id="AY088785">
    <property type="protein sequence ID" value="AAM67097.1"/>
    <property type="molecule type" value="mRNA"/>
</dbReference>
<dbReference type="PIR" id="G86200">
    <property type="entry name" value="G86200"/>
</dbReference>
<dbReference type="RefSeq" id="NP_563768.1">
    <property type="nucleotide sequence ID" value="NM_100531.3"/>
</dbReference>
<dbReference type="FunCoup" id="Q9SHJ5">
    <property type="interactions" value="1"/>
</dbReference>
<dbReference type="STRING" id="3702.Q9SHJ5"/>
<dbReference type="PaxDb" id="3702-AT1G06520.1"/>
<dbReference type="ProteomicsDB" id="248461"/>
<dbReference type="EnsemblPlants" id="AT1G06520.1">
    <property type="protein sequence ID" value="AT1G06520.1"/>
    <property type="gene ID" value="AT1G06520"/>
</dbReference>
<dbReference type="GeneID" id="837163"/>
<dbReference type="Gramene" id="AT1G06520.1">
    <property type="protein sequence ID" value="AT1G06520.1"/>
    <property type="gene ID" value="AT1G06520"/>
</dbReference>
<dbReference type="KEGG" id="ath:AT1G06520"/>
<dbReference type="Araport" id="AT1G06520"/>
<dbReference type="TAIR" id="AT1G06520">
    <property type="gene designation" value="GPAT1"/>
</dbReference>
<dbReference type="eggNOG" id="ENOG502QWBX">
    <property type="taxonomic scope" value="Eukaryota"/>
</dbReference>
<dbReference type="HOGENOM" id="CLU_028504_1_0_1"/>
<dbReference type="InParanoid" id="Q9SHJ5"/>
<dbReference type="OMA" id="MNTHVSM"/>
<dbReference type="PhylomeDB" id="Q9SHJ5"/>
<dbReference type="BRENDA" id="2.3.1.15">
    <property type="organism ID" value="399"/>
</dbReference>
<dbReference type="UniPathway" id="UPA00557">
    <property type="reaction ID" value="UER00612"/>
</dbReference>
<dbReference type="PRO" id="PR:Q9SHJ5"/>
<dbReference type="Proteomes" id="UP000006548">
    <property type="component" value="Chromosome 1"/>
</dbReference>
<dbReference type="ExpressionAtlas" id="Q9SHJ5">
    <property type="expression patterns" value="baseline and differential"/>
</dbReference>
<dbReference type="GO" id="GO:0016020">
    <property type="term" value="C:membrane"/>
    <property type="evidence" value="ECO:0000314"/>
    <property type="project" value="TAIR"/>
</dbReference>
<dbReference type="GO" id="GO:0005739">
    <property type="term" value="C:mitochondrion"/>
    <property type="evidence" value="ECO:0000314"/>
    <property type="project" value="TAIR"/>
</dbReference>
<dbReference type="GO" id="GO:0090447">
    <property type="term" value="F:glycerol-3-phosphate 2-O-acyltransferase activity"/>
    <property type="evidence" value="ECO:0000314"/>
    <property type="project" value="TAIR"/>
</dbReference>
<dbReference type="GO" id="GO:0004366">
    <property type="term" value="F:glycerol-3-phosphate O-acyltransferase activity"/>
    <property type="evidence" value="ECO:0007669"/>
    <property type="project" value="UniProtKB-EC"/>
</dbReference>
<dbReference type="GO" id="GO:0016024">
    <property type="term" value="P:CDP-diacylglycerol biosynthetic process"/>
    <property type="evidence" value="ECO:0007669"/>
    <property type="project" value="UniProtKB-UniPathway"/>
</dbReference>
<dbReference type="GO" id="GO:0048235">
    <property type="term" value="P:pollen sperm cell differentiation"/>
    <property type="evidence" value="ECO:0000315"/>
    <property type="project" value="TAIR"/>
</dbReference>
<dbReference type="CDD" id="cd06551">
    <property type="entry name" value="LPLAT"/>
    <property type="match status" value="1"/>
</dbReference>
<dbReference type="InterPro" id="IPR056462">
    <property type="entry name" value="HAD_RAM2/GPAT1-8"/>
</dbReference>
<dbReference type="InterPro" id="IPR002123">
    <property type="entry name" value="Plipid/glycerol_acylTrfase"/>
</dbReference>
<dbReference type="PANTHER" id="PTHR15486">
    <property type="entry name" value="ANCIENT UBIQUITOUS PROTEIN"/>
    <property type="match status" value="1"/>
</dbReference>
<dbReference type="PANTHER" id="PTHR15486:SF0">
    <property type="entry name" value="GLYCEROL-3-PHOSPHATE ACYLTRANSFERASE 1"/>
    <property type="match status" value="1"/>
</dbReference>
<dbReference type="Pfam" id="PF01553">
    <property type="entry name" value="Acyltransferase"/>
    <property type="match status" value="1"/>
</dbReference>
<dbReference type="Pfam" id="PF23270">
    <property type="entry name" value="HAD_RAM2_N"/>
    <property type="match status" value="1"/>
</dbReference>
<dbReference type="SMART" id="SM00563">
    <property type="entry name" value="PlsC"/>
    <property type="match status" value="1"/>
</dbReference>
<dbReference type="SUPFAM" id="SSF69593">
    <property type="entry name" value="Glycerol-3-phosphate (1)-acyltransferase"/>
    <property type="match status" value="1"/>
</dbReference>